<organism>
    <name type="scientific">Hordeum vulgare</name>
    <name type="common">Barley</name>
    <dbReference type="NCBI Taxonomy" id="4513"/>
    <lineage>
        <taxon>Eukaryota</taxon>
        <taxon>Viridiplantae</taxon>
        <taxon>Streptophyta</taxon>
        <taxon>Embryophyta</taxon>
        <taxon>Tracheophyta</taxon>
        <taxon>Spermatophyta</taxon>
        <taxon>Magnoliopsida</taxon>
        <taxon>Liliopsida</taxon>
        <taxon>Poales</taxon>
        <taxon>Poaceae</taxon>
        <taxon>BOP clade</taxon>
        <taxon>Pooideae</taxon>
        <taxon>Triticodae</taxon>
        <taxon>Triticeae</taxon>
        <taxon>Hordeinae</taxon>
        <taxon>Hordeum</taxon>
    </lineage>
</organism>
<protein>
    <recommendedName>
        <fullName>14-3-3-like protein A</fullName>
        <shortName>14-3-3A</shortName>
    </recommendedName>
</protein>
<proteinExistence type="evidence at transcript level"/>
<evidence type="ECO:0000256" key="1">
    <source>
        <dbReference type="SAM" id="MobiDB-lite"/>
    </source>
</evidence>
<evidence type="ECO:0000305" key="2"/>
<name>1433A_HORVU</name>
<dbReference type="EMBL" id="X62388">
    <property type="protein sequence ID" value="CAA44259.1"/>
    <property type="molecule type" value="mRNA"/>
</dbReference>
<dbReference type="PIR" id="S18911">
    <property type="entry name" value="S18911"/>
</dbReference>
<dbReference type="SMR" id="P29305"/>
<dbReference type="IntAct" id="P29305">
    <property type="interactions" value="29"/>
</dbReference>
<dbReference type="ExpressionAtlas" id="P29305">
    <property type="expression patterns" value="baseline and differential"/>
</dbReference>
<dbReference type="FunFam" id="1.20.190.20:FF:000002">
    <property type="entry name" value="14-3-3 protein epsilon"/>
    <property type="match status" value="1"/>
</dbReference>
<dbReference type="Gene3D" id="1.20.190.20">
    <property type="entry name" value="14-3-3 domain"/>
    <property type="match status" value="1"/>
</dbReference>
<dbReference type="InterPro" id="IPR000308">
    <property type="entry name" value="14-3-3"/>
</dbReference>
<dbReference type="InterPro" id="IPR023409">
    <property type="entry name" value="14-3-3_CS"/>
</dbReference>
<dbReference type="InterPro" id="IPR036815">
    <property type="entry name" value="14-3-3_dom_sf"/>
</dbReference>
<dbReference type="InterPro" id="IPR023410">
    <property type="entry name" value="14-3-3_domain"/>
</dbReference>
<dbReference type="PANTHER" id="PTHR18860">
    <property type="entry name" value="14-3-3 PROTEIN"/>
    <property type="match status" value="1"/>
</dbReference>
<dbReference type="Pfam" id="PF00244">
    <property type="entry name" value="14-3-3"/>
    <property type="match status" value="1"/>
</dbReference>
<dbReference type="PIRSF" id="PIRSF000868">
    <property type="entry name" value="14-3-3"/>
    <property type="match status" value="1"/>
</dbReference>
<dbReference type="PRINTS" id="PR00305">
    <property type="entry name" value="1433ZETA"/>
</dbReference>
<dbReference type="SMART" id="SM00101">
    <property type="entry name" value="14_3_3"/>
    <property type="match status" value="1"/>
</dbReference>
<dbReference type="SUPFAM" id="SSF48445">
    <property type="entry name" value="14-3-3 protein"/>
    <property type="match status" value="1"/>
</dbReference>
<dbReference type="PROSITE" id="PS00796">
    <property type="entry name" value="1433_1"/>
    <property type="match status" value="1"/>
</dbReference>
<dbReference type="PROSITE" id="PS00797">
    <property type="entry name" value="1433_2"/>
    <property type="match status" value="1"/>
</dbReference>
<feature type="chain" id="PRO_0000058678" description="14-3-3-like protein A">
    <location>
        <begin position="1"/>
        <end position="262"/>
    </location>
</feature>
<feature type="region of interest" description="Disordered" evidence="1">
    <location>
        <begin position="240"/>
        <end position="262"/>
    </location>
</feature>
<feature type="compositionally biased region" description="Basic and acidic residues" evidence="1">
    <location>
        <begin position="247"/>
        <end position="262"/>
    </location>
</feature>
<accession>P29305</accession>
<reference key="1">
    <citation type="journal article" date="1992" name="Plant J.">
        <title>A pathogen-induced gene of barley encodes a protein showing high similarity to a protein kinase regulator.</title>
        <authorList>
            <person name="Brandt J.M."/>
            <person name="Thordal-Christensen H."/>
            <person name="Vad K."/>
            <person name="Gregersen P.L."/>
            <person name="Collinge D.B."/>
        </authorList>
    </citation>
    <scope>NUCLEOTIDE SEQUENCE [MRNA]</scope>
    <source>
        <strain>cv. Pallas</strain>
        <tissue>Leaf</tissue>
    </source>
</reference>
<comment type="induction">
    <text>In response to penetration attempts of powdery mildew fungi.</text>
</comment>
<comment type="similarity">
    <text evidence="2">Belongs to the 14-3-3 family.</text>
</comment>
<sequence>MSTAEATREENVYMAKLAEQAERYEEMVEFMEKVAKTADVGELTVEERNLLSVAYKNVIGARRASWRIISSIEQKEESRGNEAYVASIKEYRTRIETELSKICDGILKLLDSHLVPSATAAESKVFYLKMKGDYHRYLAEFKAGAERKEAAENTLVAYKSAQDIALADLPTTHPIRLGLALNFSVFYYEILNSPDRACNLAKQAFDEAIAELDSLGEESYKDSTLIMQLLRDNLTLWTSDNAEEGGDEIKEAASKPEGEGHS</sequence>